<protein>
    <recommendedName>
        <fullName evidence="1">MEMO1 family protein Ta0237</fullName>
    </recommendedName>
</protein>
<gene>
    <name type="ordered locus">Ta0237</name>
</gene>
<comment type="similarity">
    <text evidence="1">Belongs to the MEMO1 family.</text>
</comment>
<name>Y237_THEAC</name>
<evidence type="ECO:0000255" key="1">
    <source>
        <dbReference type="HAMAP-Rule" id="MF_00055"/>
    </source>
</evidence>
<proteinExistence type="inferred from homology"/>
<keyword id="KW-1185">Reference proteome</keyword>
<reference key="1">
    <citation type="journal article" date="2000" name="Nature">
        <title>The genome sequence of the thermoacidophilic scavenger Thermoplasma acidophilum.</title>
        <authorList>
            <person name="Ruepp A."/>
            <person name="Graml W."/>
            <person name="Santos-Martinez M.-L."/>
            <person name="Koretke K.K."/>
            <person name="Volker C."/>
            <person name="Mewes H.-W."/>
            <person name="Frishman D."/>
            <person name="Stocker S."/>
            <person name="Lupas A.N."/>
            <person name="Baumeister W."/>
        </authorList>
    </citation>
    <scope>NUCLEOTIDE SEQUENCE [LARGE SCALE GENOMIC DNA]</scope>
    <source>
        <strain>ATCC 25905 / DSM 1728 / JCM 9062 / NBRC 15155 / AMRC-C165</strain>
    </source>
</reference>
<accession>Q9HLJ1</accession>
<sequence length="268" mass="30051">MKRKPAVAGYFYPERKDELYSLLSSFAIPEQHVSGTIIGAVVPHAGIIYSGRTAMYSYRAIEKSAVRDFVIIGPNHRPLTPYASLYPEGEWSTPLGDALINDRMAEALYRDSNYIVKDEESHLMEHSVEVQIPFLQYLFGDGFRFVPVILGDQEIDVARDIGEAIMKIEDPFIFIASSDFTHYEDAKRVEKKDMDLISAILTLDLDKFYSVLEKENVTACGYGAIAALMYYTKKRGGRMIFLNHSNSGDVTGDYSEVVGYASLVSVIP</sequence>
<dbReference type="EMBL" id="AL445063">
    <property type="protein sequence ID" value="CAC11382.1"/>
    <property type="molecule type" value="Genomic_DNA"/>
</dbReference>
<dbReference type="RefSeq" id="WP_010900666.1">
    <property type="nucleotide sequence ID" value="NC_002578.1"/>
</dbReference>
<dbReference type="SMR" id="Q9HLJ1"/>
<dbReference type="FunCoup" id="Q9HLJ1">
    <property type="interactions" value="53"/>
</dbReference>
<dbReference type="STRING" id="273075.gene:9571454"/>
<dbReference type="PaxDb" id="273075-Ta0237"/>
<dbReference type="EnsemblBacteria" id="CAC11382">
    <property type="protein sequence ID" value="CAC11382"/>
    <property type="gene ID" value="CAC11382"/>
</dbReference>
<dbReference type="KEGG" id="tac:Ta0237"/>
<dbReference type="eggNOG" id="arCOG01728">
    <property type="taxonomic scope" value="Archaea"/>
</dbReference>
<dbReference type="HOGENOM" id="CLU_038085_2_0_2"/>
<dbReference type="InParanoid" id="Q9HLJ1"/>
<dbReference type="OrthoDB" id="372162at2157"/>
<dbReference type="Proteomes" id="UP000001024">
    <property type="component" value="Chromosome"/>
</dbReference>
<dbReference type="CDD" id="cd07361">
    <property type="entry name" value="MEMO_like"/>
    <property type="match status" value="1"/>
</dbReference>
<dbReference type="Gene3D" id="3.40.830.10">
    <property type="entry name" value="LigB-like"/>
    <property type="match status" value="1"/>
</dbReference>
<dbReference type="HAMAP" id="MF_00055">
    <property type="entry name" value="MEMO1"/>
    <property type="match status" value="1"/>
</dbReference>
<dbReference type="InterPro" id="IPR002737">
    <property type="entry name" value="MEMO1_fam"/>
</dbReference>
<dbReference type="NCBIfam" id="TIGR04336">
    <property type="entry name" value="AmmeMemoSam_B"/>
    <property type="match status" value="1"/>
</dbReference>
<dbReference type="NCBIfam" id="NF001987">
    <property type="entry name" value="PRK00782.1"/>
    <property type="match status" value="1"/>
</dbReference>
<dbReference type="PANTHER" id="PTHR11060">
    <property type="entry name" value="PROTEIN MEMO1"/>
    <property type="match status" value="1"/>
</dbReference>
<dbReference type="PANTHER" id="PTHR11060:SF0">
    <property type="entry name" value="PROTEIN MEMO1"/>
    <property type="match status" value="1"/>
</dbReference>
<dbReference type="Pfam" id="PF01875">
    <property type="entry name" value="Memo"/>
    <property type="match status" value="1"/>
</dbReference>
<feature type="chain" id="PRO_0000134392" description="MEMO1 family protein Ta0237">
    <location>
        <begin position="1"/>
        <end position="268"/>
    </location>
</feature>
<organism>
    <name type="scientific">Thermoplasma acidophilum (strain ATCC 25905 / DSM 1728 / JCM 9062 / NBRC 15155 / AMRC-C165)</name>
    <dbReference type="NCBI Taxonomy" id="273075"/>
    <lineage>
        <taxon>Archaea</taxon>
        <taxon>Methanobacteriati</taxon>
        <taxon>Thermoplasmatota</taxon>
        <taxon>Thermoplasmata</taxon>
        <taxon>Thermoplasmatales</taxon>
        <taxon>Thermoplasmataceae</taxon>
        <taxon>Thermoplasma</taxon>
    </lineage>
</organism>